<evidence type="ECO:0000256" key="1">
    <source>
        <dbReference type="SAM" id="MobiDB-lite"/>
    </source>
</evidence>
<evidence type="ECO:0000269" key="2">
    <source>
    </source>
</evidence>
<evidence type="ECO:0000305" key="3"/>
<comment type="function">
    <text evidence="2">Might play a role in viral replication since it is associated with viral replication centers. Seems to have an effect on DBP localization.</text>
</comment>
<comment type="subcellular location">
    <subcellularLocation>
        <location evidence="2">Host nucleus</location>
        <location evidence="2">Host nucleoplasm</location>
    </subcellularLocation>
    <subcellularLocation>
        <location evidence="2">Host nucleus</location>
        <location evidence="2">Host nucleolus</location>
    </subcellularLocation>
    <text>At 18 to 24 hours postinfection, UXP is strongly associated with nucleoli and is found throughout the nucleus. Later, UXP is associated with the periphery of replication centers.</text>
</comment>
<comment type="induction">
    <text>Expressed abundantly in the late phase of the viral replicative cycle.</text>
</comment>
<comment type="similarity">
    <text evidence="3">Belongs to the adenoviridae U exon protein family.</text>
</comment>
<keyword id="KW-1048">Host nucleus</keyword>
<keyword id="KW-0426">Late protein</keyword>
<keyword id="KW-1185">Reference proteome</keyword>
<protein>
    <recommendedName>
        <fullName>U exon protein</fullName>
        <shortName>UXP</shortName>
    </recommendedName>
</protein>
<dbReference type="EMBL" id="J01917">
    <property type="status" value="NOT_ANNOTATED_CDS"/>
    <property type="molecule type" value="Genomic_DNA"/>
</dbReference>
<dbReference type="Proteomes" id="UP000008167">
    <property type="component" value="Segment"/>
</dbReference>
<dbReference type="GO" id="GO:0044196">
    <property type="term" value="C:host cell nucleolus"/>
    <property type="evidence" value="ECO:0007669"/>
    <property type="project" value="UniProtKB-SubCell"/>
</dbReference>
<dbReference type="GO" id="GO:0044095">
    <property type="term" value="C:host cell nucleoplasm"/>
    <property type="evidence" value="ECO:0007669"/>
    <property type="project" value="UniProtKB-SubCell"/>
</dbReference>
<name>UXP_ADE02</name>
<organismHost>
    <name type="scientific">Homo sapiens</name>
    <name type="common">Human</name>
    <dbReference type="NCBI Taxonomy" id="9606"/>
</organismHost>
<organism>
    <name type="scientific">Human adenovirus C serotype 2</name>
    <name type="common">HAdV-2</name>
    <name type="synonym">Human adenovirus 2</name>
    <dbReference type="NCBI Taxonomy" id="10515"/>
    <lineage>
        <taxon>Viruses</taxon>
        <taxon>Varidnaviria</taxon>
        <taxon>Bamfordvirae</taxon>
        <taxon>Preplasmiviricota</taxon>
        <taxon>Tectiliviricetes</taxon>
        <taxon>Rowavirales</taxon>
        <taxon>Adenoviridae</taxon>
        <taxon>Mastadenovirus</taxon>
        <taxon>Human mastadenovirus C</taxon>
    </lineage>
</organism>
<accession>P0DJX2</accession>
<sequence>MKIVGAEGQEHEEFDIPFKLWRKFAAKRRLRYQSWEEGKEVMLNKLDKDLLTDFKAFAARFSSRPRPSKIFGTSSSEAISGEGNGQSGRGAARNHPRARTRCGATSTNHGGRVVPVAVAAASPRAPKKAAEAASRVRGRRRLVTRCAGAAHTQPAAIDLDGGFGHCVQKEKEAPLSQARAPAIPRGDRGQRGRKRRCGATNGGFQQPTGANQARQGR</sequence>
<proteinExistence type="evidence at transcript level"/>
<feature type="chain" id="PRO_0000421108" description="U exon protein">
    <location>
        <begin position="1"/>
        <end position="217"/>
    </location>
</feature>
<feature type="region of interest" description="Disordered" evidence="1">
    <location>
        <begin position="68"/>
        <end position="110"/>
    </location>
</feature>
<feature type="region of interest" description="Disordered" evidence="1">
    <location>
        <begin position="170"/>
        <end position="217"/>
    </location>
</feature>
<feature type="compositionally biased region" description="Polar residues" evidence="1">
    <location>
        <begin position="202"/>
        <end position="217"/>
    </location>
</feature>
<reference key="1">
    <citation type="journal article" date="1979" name="Cell">
        <title>Nucleotide sequence analysis of the leader segments in a cloned copy of adenovirus 2 fiber mRNA.</title>
        <authorList>
            <person name="Zain S."/>
            <person name="Sambrook J."/>
            <person name="Roberts R.J."/>
            <person name="Keller W."/>
            <person name="Fried M."/>
            <person name="Dunn A.R."/>
        </authorList>
    </citation>
    <scope>NUCLEOTIDE SEQUENCE [GENOMIC DNA] OF 1-55</scope>
</reference>
<reference key="2">
    <citation type="journal article" date="2007" name="J. Virol.">
        <title>Identification of a new human adenovirus protein encoded by a novel late l-strand transcription unit.</title>
        <authorList>
            <person name="Tollefson A.E."/>
            <person name="Ying B."/>
            <person name="Doronin K."/>
            <person name="Sidor P.D."/>
            <person name="Wold W.S."/>
        </authorList>
    </citation>
    <scope>IDENTIFICATION</scope>
    <scope>SUBCELLULAR LOCATION</scope>
    <scope>FUNCTION</scope>
    <source>
        <strain>Human adenovirus C serotype 5</strain>
    </source>
</reference>